<evidence type="ECO:0000255" key="1">
    <source>
        <dbReference type="HAMAP-Rule" id="MF_00203"/>
    </source>
</evidence>
<sequence>MPIIESSQSLLLDKDKLKRILLTIPSEPGCYLMRDKNETLLYIGKSKSLKSRVRSYFNTNNTALSPRISLMVRQVYDIEFILTDSDSEALNLESNLIKEHQPYFNILLKDDKKYPYLCITWSEEYPRIFITRRRRLRNSEDRYYGPYVDVTLLRKTLFLLKKLFPLRQRPRALYKDRTCLNYSINRCPGVCQRLIEPDDYHKTLKKVAMIFEGRTDQLKDLLHKQMLIQSKLQEFEKAAIIRDQIKGIEQLYAAQKMTIPDSTVSRDVLGLSIDSNVCCVQLFQMRAGKLVGRIGFVYNSLELRSELILQKVLEEYYSQIDNVTIPPEILLQSSIPQQSYFEQWLSELRGSQVKIVIPKRKEKAELVKLVKRNADIELERVKDGQSKHLIELEDLTQVLDLAFVPRRIEGYDISHLAGTEVVGSQVVFIEGIPAKQHYRKYAIKSSSISSGHSDDYMALAEVIRRRFRRWSKYKADGLDLTELRNKKLSSLDPLIITDWPDLIMIDGGKGQLKAVEEALRQLGLDSDINVCSLAKRNEEIFVPGSYNKLDTEKNQPGLLLLRRLRDEAHRFAINFHRKKRSLSMKRSQLIDIPGVGPRRIKSLLAHFKSVQAIQLATEKEIASVEGLGTETASIIFKYFNPIERDIV</sequence>
<gene>
    <name evidence="1" type="primary">uvrC</name>
    <name type="ordered locus">P9211_08821</name>
</gene>
<comment type="function">
    <text evidence="1">The UvrABC repair system catalyzes the recognition and processing of DNA lesions. UvrC both incises the 5' and 3' sides of the lesion. The N-terminal half is responsible for the 3' incision and the C-terminal half is responsible for the 5' incision.</text>
</comment>
<comment type="subunit">
    <text evidence="1">Interacts with UvrB in an incision complex.</text>
</comment>
<comment type="subcellular location">
    <subcellularLocation>
        <location evidence="1">Cytoplasm</location>
    </subcellularLocation>
</comment>
<comment type="similarity">
    <text evidence="1">Belongs to the UvrC family.</text>
</comment>
<dbReference type="EMBL" id="CP000878">
    <property type="protein sequence ID" value="ABX08813.1"/>
    <property type="molecule type" value="Genomic_DNA"/>
</dbReference>
<dbReference type="RefSeq" id="WP_012195435.1">
    <property type="nucleotide sequence ID" value="NC_009976.1"/>
</dbReference>
<dbReference type="SMR" id="A9BAF1"/>
<dbReference type="STRING" id="93059.P9211_08821"/>
<dbReference type="KEGG" id="pmj:P9211_08821"/>
<dbReference type="eggNOG" id="COG0322">
    <property type="taxonomic scope" value="Bacteria"/>
</dbReference>
<dbReference type="HOGENOM" id="CLU_014841_3_2_3"/>
<dbReference type="OrthoDB" id="9804933at2"/>
<dbReference type="Proteomes" id="UP000000788">
    <property type="component" value="Chromosome"/>
</dbReference>
<dbReference type="GO" id="GO:0005737">
    <property type="term" value="C:cytoplasm"/>
    <property type="evidence" value="ECO:0007669"/>
    <property type="project" value="UniProtKB-SubCell"/>
</dbReference>
<dbReference type="GO" id="GO:0009380">
    <property type="term" value="C:excinuclease repair complex"/>
    <property type="evidence" value="ECO:0007669"/>
    <property type="project" value="InterPro"/>
</dbReference>
<dbReference type="GO" id="GO:0003677">
    <property type="term" value="F:DNA binding"/>
    <property type="evidence" value="ECO:0007669"/>
    <property type="project" value="UniProtKB-UniRule"/>
</dbReference>
<dbReference type="GO" id="GO:0009381">
    <property type="term" value="F:excinuclease ABC activity"/>
    <property type="evidence" value="ECO:0007669"/>
    <property type="project" value="UniProtKB-UniRule"/>
</dbReference>
<dbReference type="GO" id="GO:0006289">
    <property type="term" value="P:nucleotide-excision repair"/>
    <property type="evidence" value="ECO:0007669"/>
    <property type="project" value="UniProtKB-UniRule"/>
</dbReference>
<dbReference type="GO" id="GO:0009432">
    <property type="term" value="P:SOS response"/>
    <property type="evidence" value="ECO:0007669"/>
    <property type="project" value="UniProtKB-UniRule"/>
</dbReference>
<dbReference type="CDD" id="cd10434">
    <property type="entry name" value="GIY-YIG_UvrC_Cho"/>
    <property type="match status" value="1"/>
</dbReference>
<dbReference type="FunFam" id="3.40.1440.10:FF:000001">
    <property type="entry name" value="UvrABC system protein C"/>
    <property type="match status" value="1"/>
</dbReference>
<dbReference type="Gene3D" id="1.10.150.20">
    <property type="entry name" value="5' to 3' exonuclease, C-terminal subdomain"/>
    <property type="match status" value="1"/>
</dbReference>
<dbReference type="Gene3D" id="3.40.1440.10">
    <property type="entry name" value="GIY-YIG endonuclease"/>
    <property type="match status" value="1"/>
</dbReference>
<dbReference type="Gene3D" id="4.10.860.10">
    <property type="entry name" value="UVR domain"/>
    <property type="match status" value="1"/>
</dbReference>
<dbReference type="Gene3D" id="3.30.420.340">
    <property type="entry name" value="UvrC, RNAse H endonuclease domain"/>
    <property type="match status" value="1"/>
</dbReference>
<dbReference type="HAMAP" id="MF_00203">
    <property type="entry name" value="UvrC"/>
    <property type="match status" value="1"/>
</dbReference>
<dbReference type="InterPro" id="IPR000305">
    <property type="entry name" value="GIY-YIG_endonuc"/>
</dbReference>
<dbReference type="InterPro" id="IPR035901">
    <property type="entry name" value="GIY-YIG_endonuc_sf"/>
</dbReference>
<dbReference type="InterPro" id="IPR047296">
    <property type="entry name" value="GIY-YIG_UvrC_Cho"/>
</dbReference>
<dbReference type="InterPro" id="IPR003583">
    <property type="entry name" value="Hlx-hairpin-Hlx_DNA-bd_motif"/>
</dbReference>
<dbReference type="InterPro" id="IPR010994">
    <property type="entry name" value="RuvA_2-like"/>
</dbReference>
<dbReference type="InterPro" id="IPR001943">
    <property type="entry name" value="UVR_dom"/>
</dbReference>
<dbReference type="InterPro" id="IPR036876">
    <property type="entry name" value="UVR_dom_sf"/>
</dbReference>
<dbReference type="InterPro" id="IPR050066">
    <property type="entry name" value="UvrABC_protein_C"/>
</dbReference>
<dbReference type="InterPro" id="IPR004791">
    <property type="entry name" value="UvrC"/>
</dbReference>
<dbReference type="InterPro" id="IPR001162">
    <property type="entry name" value="UvrC_RNase_H_dom"/>
</dbReference>
<dbReference type="InterPro" id="IPR038476">
    <property type="entry name" value="UvrC_RNase_H_dom_sf"/>
</dbReference>
<dbReference type="NCBIfam" id="NF001824">
    <property type="entry name" value="PRK00558.1-5"/>
    <property type="match status" value="1"/>
</dbReference>
<dbReference type="NCBIfam" id="TIGR00194">
    <property type="entry name" value="uvrC"/>
    <property type="match status" value="1"/>
</dbReference>
<dbReference type="PANTHER" id="PTHR30562:SF1">
    <property type="entry name" value="UVRABC SYSTEM PROTEIN C"/>
    <property type="match status" value="1"/>
</dbReference>
<dbReference type="PANTHER" id="PTHR30562">
    <property type="entry name" value="UVRC/OXIDOREDUCTASE"/>
    <property type="match status" value="1"/>
</dbReference>
<dbReference type="Pfam" id="PF01541">
    <property type="entry name" value="GIY-YIG"/>
    <property type="match status" value="1"/>
</dbReference>
<dbReference type="Pfam" id="PF14520">
    <property type="entry name" value="HHH_5"/>
    <property type="match status" value="1"/>
</dbReference>
<dbReference type="Pfam" id="PF02151">
    <property type="entry name" value="UVR"/>
    <property type="match status" value="1"/>
</dbReference>
<dbReference type="Pfam" id="PF22920">
    <property type="entry name" value="UvrC_RNaseH"/>
    <property type="match status" value="1"/>
</dbReference>
<dbReference type="Pfam" id="PF08459">
    <property type="entry name" value="UvrC_RNaseH_dom"/>
    <property type="match status" value="1"/>
</dbReference>
<dbReference type="SMART" id="SM00465">
    <property type="entry name" value="GIYc"/>
    <property type="match status" value="1"/>
</dbReference>
<dbReference type="SMART" id="SM00278">
    <property type="entry name" value="HhH1"/>
    <property type="match status" value="2"/>
</dbReference>
<dbReference type="SUPFAM" id="SSF46600">
    <property type="entry name" value="C-terminal UvrC-binding domain of UvrB"/>
    <property type="match status" value="1"/>
</dbReference>
<dbReference type="SUPFAM" id="SSF82771">
    <property type="entry name" value="GIY-YIG endonuclease"/>
    <property type="match status" value="1"/>
</dbReference>
<dbReference type="SUPFAM" id="SSF47781">
    <property type="entry name" value="RuvA domain 2-like"/>
    <property type="match status" value="1"/>
</dbReference>
<dbReference type="PROSITE" id="PS50164">
    <property type="entry name" value="GIY_YIG"/>
    <property type="match status" value="1"/>
</dbReference>
<dbReference type="PROSITE" id="PS50151">
    <property type="entry name" value="UVR"/>
    <property type="match status" value="1"/>
</dbReference>
<dbReference type="PROSITE" id="PS50165">
    <property type="entry name" value="UVRC"/>
    <property type="match status" value="1"/>
</dbReference>
<keyword id="KW-0963">Cytoplasm</keyword>
<keyword id="KW-0227">DNA damage</keyword>
<keyword id="KW-0228">DNA excision</keyword>
<keyword id="KW-0234">DNA repair</keyword>
<keyword id="KW-0267">Excision nuclease</keyword>
<keyword id="KW-1185">Reference proteome</keyword>
<keyword id="KW-0742">SOS response</keyword>
<protein>
    <recommendedName>
        <fullName evidence="1">UvrABC system protein C</fullName>
        <shortName evidence="1">Protein UvrC</shortName>
    </recommendedName>
    <alternativeName>
        <fullName evidence="1">Excinuclease ABC subunit C</fullName>
    </alternativeName>
</protein>
<proteinExistence type="inferred from homology"/>
<feature type="chain" id="PRO_1000099508" description="UvrABC system protein C">
    <location>
        <begin position="1"/>
        <end position="647"/>
    </location>
</feature>
<feature type="domain" description="GIY-YIG" evidence="1">
    <location>
        <begin position="26"/>
        <end position="106"/>
    </location>
</feature>
<feature type="domain" description="UVR" evidence="1">
    <location>
        <begin position="216"/>
        <end position="251"/>
    </location>
</feature>
<organism>
    <name type="scientific">Prochlorococcus marinus (strain MIT 9211)</name>
    <dbReference type="NCBI Taxonomy" id="93059"/>
    <lineage>
        <taxon>Bacteria</taxon>
        <taxon>Bacillati</taxon>
        <taxon>Cyanobacteriota</taxon>
        <taxon>Cyanophyceae</taxon>
        <taxon>Synechococcales</taxon>
        <taxon>Prochlorococcaceae</taxon>
        <taxon>Prochlorococcus</taxon>
    </lineage>
</organism>
<reference key="1">
    <citation type="journal article" date="2007" name="PLoS Genet.">
        <title>Patterns and implications of gene gain and loss in the evolution of Prochlorococcus.</title>
        <authorList>
            <person name="Kettler G.C."/>
            <person name="Martiny A.C."/>
            <person name="Huang K."/>
            <person name="Zucker J."/>
            <person name="Coleman M.L."/>
            <person name="Rodrigue S."/>
            <person name="Chen F."/>
            <person name="Lapidus A."/>
            <person name="Ferriera S."/>
            <person name="Johnson J."/>
            <person name="Steglich C."/>
            <person name="Church G.M."/>
            <person name="Richardson P."/>
            <person name="Chisholm S.W."/>
        </authorList>
    </citation>
    <scope>NUCLEOTIDE SEQUENCE [LARGE SCALE GENOMIC DNA]</scope>
    <source>
        <strain>MIT 9211</strain>
    </source>
</reference>
<accession>A9BAF1</accession>
<name>UVRC_PROM4</name>